<gene>
    <name type="primary">higB</name>
    <name type="ordered locus">Z4436</name>
    <name type="ordered locus">ECs3965</name>
</gene>
<organism>
    <name type="scientific">Escherichia coli O157:H7</name>
    <dbReference type="NCBI Taxonomy" id="83334"/>
    <lineage>
        <taxon>Bacteria</taxon>
        <taxon>Pseudomonadati</taxon>
        <taxon>Pseudomonadota</taxon>
        <taxon>Gammaproteobacteria</taxon>
        <taxon>Enterobacterales</taxon>
        <taxon>Enterobacteriaceae</taxon>
        <taxon>Escherichia</taxon>
    </lineage>
</organism>
<evidence type="ECO:0000250" key="1">
    <source>
        <dbReference type="UniProtKB" id="P64578"/>
    </source>
</evidence>
<evidence type="ECO:0000305" key="2"/>
<reference key="1">
    <citation type="journal article" date="2001" name="Nature">
        <title>Genome sequence of enterohaemorrhagic Escherichia coli O157:H7.</title>
        <authorList>
            <person name="Perna N.T."/>
            <person name="Plunkett G. III"/>
            <person name="Burland V."/>
            <person name="Mau B."/>
            <person name="Glasner J.D."/>
            <person name="Rose D.J."/>
            <person name="Mayhew G.F."/>
            <person name="Evans P.S."/>
            <person name="Gregor J."/>
            <person name="Kirkpatrick H.A."/>
            <person name="Posfai G."/>
            <person name="Hackett J."/>
            <person name="Klink S."/>
            <person name="Boutin A."/>
            <person name="Shao Y."/>
            <person name="Miller L."/>
            <person name="Grotbeck E.J."/>
            <person name="Davis N.W."/>
            <person name="Lim A."/>
            <person name="Dimalanta E.T."/>
            <person name="Potamousis K."/>
            <person name="Apodaca J."/>
            <person name="Anantharaman T.S."/>
            <person name="Lin J."/>
            <person name="Yen G."/>
            <person name="Schwartz D.C."/>
            <person name="Welch R.A."/>
            <person name="Blattner F.R."/>
        </authorList>
    </citation>
    <scope>NUCLEOTIDE SEQUENCE [LARGE SCALE GENOMIC DNA]</scope>
    <source>
        <strain>O157:H7 / EDL933 / ATCC 700927 / EHEC</strain>
    </source>
</reference>
<reference key="2">
    <citation type="journal article" date="2001" name="DNA Res.">
        <title>Complete genome sequence of enterohemorrhagic Escherichia coli O157:H7 and genomic comparison with a laboratory strain K-12.</title>
        <authorList>
            <person name="Hayashi T."/>
            <person name="Makino K."/>
            <person name="Ohnishi M."/>
            <person name="Kurokawa K."/>
            <person name="Ishii K."/>
            <person name="Yokoyama K."/>
            <person name="Han C.-G."/>
            <person name="Ohtsubo E."/>
            <person name="Nakayama K."/>
            <person name="Murata T."/>
            <person name="Tanaka M."/>
            <person name="Tobe T."/>
            <person name="Iida T."/>
            <person name="Takami H."/>
            <person name="Honda T."/>
            <person name="Sasakawa C."/>
            <person name="Ogasawara N."/>
            <person name="Yasunaga T."/>
            <person name="Kuhara S."/>
            <person name="Shiba T."/>
            <person name="Hattori M."/>
            <person name="Shinagawa H."/>
        </authorList>
    </citation>
    <scope>NUCLEOTIDE SEQUENCE [LARGE SCALE GENOMIC DNA]</scope>
    <source>
        <strain>O157:H7 / Sakai / RIMD 0509952 / EHEC</strain>
    </source>
</reference>
<feature type="chain" id="PRO_0000169422" description="mRNA interferase HigB">
    <location>
        <begin position="1"/>
        <end position="104"/>
    </location>
</feature>
<protein>
    <recommendedName>
        <fullName>mRNA interferase HigB</fullName>
        <ecNumber>3.1.-.-</ecNumber>
    </recommendedName>
    <alternativeName>
        <fullName>Endoribonuclease HigB</fullName>
    </alternativeName>
    <alternativeName>
        <fullName>Toxin HigB</fullName>
    </alternativeName>
</protein>
<sequence length="104" mass="12103">MHLITQKALKDAAEKYPQHKTELVALGNTIAKGYFKKPESLKAVFPSLDNFKYLDKHYVFNVGGNELRVVAMVFFESQKCYIREVMTHKEYDFFTAVHRTKGKK</sequence>
<keyword id="KW-0255">Endonuclease</keyword>
<keyword id="KW-0378">Hydrolase</keyword>
<keyword id="KW-0540">Nuclease</keyword>
<keyword id="KW-1185">Reference proteome</keyword>
<keyword id="KW-0694">RNA-binding</keyword>
<keyword id="KW-1277">Toxin-antitoxin system</keyword>
<name>HIGB_ECO57</name>
<accession>P64579</accession>
<accession>P42595</accession>
<proteinExistence type="inferred from homology"/>
<comment type="function">
    <text evidence="1">Toxic component of a type II toxin-antitoxin (TA) system. A probable translation-dependent mRNA interferase.</text>
</comment>
<comment type="subunit">
    <text evidence="1">Probably forms a complex with the antitoxin HigA which inhibits the mRNA interferase activity.</text>
</comment>
<comment type="similarity">
    <text evidence="2">Belongs to the HigB mRNA interferase family.</text>
</comment>
<dbReference type="EC" id="3.1.-.-"/>
<dbReference type="EMBL" id="AE005174">
    <property type="protein sequence ID" value="AAG58216.1"/>
    <property type="molecule type" value="Genomic_DNA"/>
</dbReference>
<dbReference type="EMBL" id="BA000007">
    <property type="protein sequence ID" value="BAB37388.1"/>
    <property type="molecule type" value="Genomic_DNA"/>
</dbReference>
<dbReference type="PIR" id="D85969">
    <property type="entry name" value="D85969"/>
</dbReference>
<dbReference type="PIR" id="E91124">
    <property type="entry name" value="E91124"/>
</dbReference>
<dbReference type="RefSeq" id="NP_311992.1">
    <property type="nucleotide sequence ID" value="NC_002695.1"/>
</dbReference>
<dbReference type="RefSeq" id="WP_000550189.1">
    <property type="nucleotide sequence ID" value="NZ_VOAI01000009.1"/>
</dbReference>
<dbReference type="SMR" id="P64579"/>
<dbReference type="STRING" id="155864.Z4436"/>
<dbReference type="GeneID" id="916202"/>
<dbReference type="GeneID" id="93778904"/>
<dbReference type="KEGG" id="ece:Z4436"/>
<dbReference type="KEGG" id="ecs:ECs_3965"/>
<dbReference type="PATRIC" id="fig|386585.9.peg.4139"/>
<dbReference type="eggNOG" id="COG4680">
    <property type="taxonomic scope" value="Bacteria"/>
</dbReference>
<dbReference type="HOGENOM" id="CLU_153067_0_1_6"/>
<dbReference type="OMA" id="VFTHKEY"/>
<dbReference type="Proteomes" id="UP000000558">
    <property type="component" value="Chromosome"/>
</dbReference>
<dbReference type="Proteomes" id="UP000002519">
    <property type="component" value="Chromosome"/>
</dbReference>
<dbReference type="GO" id="GO:0110001">
    <property type="term" value="C:toxin-antitoxin complex"/>
    <property type="evidence" value="ECO:0007669"/>
    <property type="project" value="InterPro"/>
</dbReference>
<dbReference type="GO" id="GO:0004519">
    <property type="term" value="F:endonuclease activity"/>
    <property type="evidence" value="ECO:0007669"/>
    <property type="project" value="UniProtKB-KW"/>
</dbReference>
<dbReference type="GO" id="GO:0003723">
    <property type="term" value="F:RNA binding"/>
    <property type="evidence" value="ECO:0007669"/>
    <property type="project" value="UniProtKB-KW"/>
</dbReference>
<dbReference type="InterPro" id="IPR018669">
    <property type="entry name" value="Toxin_HigB"/>
</dbReference>
<dbReference type="Pfam" id="PF09907">
    <property type="entry name" value="HigB_toxin"/>
    <property type="match status" value="1"/>
</dbReference>